<dbReference type="EC" id="4.2.1.20" evidence="1"/>
<dbReference type="EMBL" id="CP000009">
    <property type="protein sequence ID" value="AAW60963.1"/>
    <property type="molecule type" value="Genomic_DNA"/>
</dbReference>
<dbReference type="RefSeq" id="WP_011252755.1">
    <property type="nucleotide sequence ID" value="NC_006677.1"/>
</dbReference>
<dbReference type="SMR" id="Q5FRN3"/>
<dbReference type="STRING" id="290633.GOX1202"/>
<dbReference type="KEGG" id="gox:GOX1202"/>
<dbReference type="eggNOG" id="COG0159">
    <property type="taxonomic scope" value="Bacteria"/>
</dbReference>
<dbReference type="HOGENOM" id="CLU_016734_0_0_5"/>
<dbReference type="UniPathway" id="UPA00035">
    <property type="reaction ID" value="UER00044"/>
</dbReference>
<dbReference type="Proteomes" id="UP000006375">
    <property type="component" value="Chromosome"/>
</dbReference>
<dbReference type="GO" id="GO:0005829">
    <property type="term" value="C:cytosol"/>
    <property type="evidence" value="ECO:0007669"/>
    <property type="project" value="TreeGrafter"/>
</dbReference>
<dbReference type="GO" id="GO:0004834">
    <property type="term" value="F:tryptophan synthase activity"/>
    <property type="evidence" value="ECO:0007669"/>
    <property type="project" value="UniProtKB-UniRule"/>
</dbReference>
<dbReference type="CDD" id="cd04724">
    <property type="entry name" value="Tryptophan_synthase_alpha"/>
    <property type="match status" value="1"/>
</dbReference>
<dbReference type="FunFam" id="3.20.20.70:FF:000037">
    <property type="entry name" value="Tryptophan synthase alpha chain"/>
    <property type="match status" value="1"/>
</dbReference>
<dbReference type="Gene3D" id="3.20.20.70">
    <property type="entry name" value="Aldolase class I"/>
    <property type="match status" value="1"/>
</dbReference>
<dbReference type="HAMAP" id="MF_00131">
    <property type="entry name" value="Trp_synth_alpha"/>
    <property type="match status" value="1"/>
</dbReference>
<dbReference type="InterPro" id="IPR013785">
    <property type="entry name" value="Aldolase_TIM"/>
</dbReference>
<dbReference type="InterPro" id="IPR011060">
    <property type="entry name" value="RibuloseP-bd_barrel"/>
</dbReference>
<dbReference type="InterPro" id="IPR002028">
    <property type="entry name" value="Trp_synthase_suA"/>
</dbReference>
<dbReference type="NCBIfam" id="TIGR00262">
    <property type="entry name" value="trpA"/>
    <property type="match status" value="1"/>
</dbReference>
<dbReference type="PANTHER" id="PTHR43406:SF1">
    <property type="entry name" value="TRYPTOPHAN SYNTHASE ALPHA CHAIN, CHLOROPLASTIC"/>
    <property type="match status" value="1"/>
</dbReference>
<dbReference type="PANTHER" id="PTHR43406">
    <property type="entry name" value="TRYPTOPHAN SYNTHASE, ALPHA CHAIN"/>
    <property type="match status" value="1"/>
</dbReference>
<dbReference type="Pfam" id="PF00290">
    <property type="entry name" value="Trp_syntA"/>
    <property type="match status" value="1"/>
</dbReference>
<dbReference type="SUPFAM" id="SSF51366">
    <property type="entry name" value="Ribulose-phoshate binding barrel"/>
    <property type="match status" value="1"/>
</dbReference>
<protein>
    <recommendedName>
        <fullName evidence="1">Tryptophan synthase alpha chain</fullName>
        <ecNumber evidence="1">4.2.1.20</ecNumber>
    </recommendedName>
</protein>
<feature type="chain" id="PRO_0000098786" description="Tryptophan synthase alpha chain">
    <location>
        <begin position="1"/>
        <end position="270"/>
    </location>
</feature>
<feature type="active site" description="Proton acceptor" evidence="1">
    <location>
        <position position="49"/>
    </location>
</feature>
<feature type="active site" description="Proton acceptor" evidence="1">
    <location>
        <position position="60"/>
    </location>
</feature>
<comment type="function">
    <text evidence="1">The alpha subunit is responsible for the aldol cleavage of indoleglycerol phosphate to indole and glyceraldehyde 3-phosphate.</text>
</comment>
<comment type="catalytic activity">
    <reaction evidence="1">
        <text>(1S,2R)-1-C-(indol-3-yl)glycerol 3-phosphate + L-serine = D-glyceraldehyde 3-phosphate + L-tryptophan + H2O</text>
        <dbReference type="Rhea" id="RHEA:10532"/>
        <dbReference type="ChEBI" id="CHEBI:15377"/>
        <dbReference type="ChEBI" id="CHEBI:33384"/>
        <dbReference type="ChEBI" id="CHEBI:57912"/>
        <dbReference type="ChEBI" id="CHEBI:58866"/>
        <dbReference type="ChEBI" id="CHEBI:59776"/>
        <dbReference type="EC" id="4.2.1.20"/>
    </reaction>
</comment>
<comment type="pathway">
    <text evidence="1">Amino-acid biosynthesis; L-tryptophan biosynthesis; L-tryptophan from chorismate: step 5/5.</text>
</comment>
<comment type="subunit">
    <text evidence="1">Tetramer of two alpha and two beta chains.</text>
</comment>
<comment type="similarity">
    <text evidence="1">Belongs to the TrpA family.</text>
</comment>
<gene>
    <name evidence="1" type="primary">trpA</name>
    <name type="ordered locus">GOX1202</name>
</gene>
<evidence type="ECO:0000255" key="1">
    <source>
        <dbReference type="HAMAP-Rule" id="MF_00131"/>
    </source>
</evidence>
<keyword id="KW-0028">Amino-acid biosynthesis</keyword>
<keyword id="KW-0057">Aromatic amino acid biosynthesis</keyword>
<keyword id="KW-0456">Lyase</keyword>
<keyword id="KW-1185">Reference proteome</keyword>
<keyword id="KW-0822">Tryptophan biosynthesis</keyword>
<accession>Q5FRN3</accession>
<reference key="1">
    <citation type="journal article" date="2005" name="Nat. Biotechnol.">
        <title>Complete genome sequence of the acetic acid bacterium Gluconobacter oxydans.</title>
        <authorList>
            <person name="Prust C."/>
            <person name="Hoffmeister M."/>
            <person name="Liesegang H."/>
            <person name="Wiezer A."/>
            <person name="Fricke W.F."/>
            <person name="Ehrenreich A."/>
            <person name="Gottschalk G."/>
            <person name="Deppenmeier U."/>
        </authorList>
    </citation>
    <scope>NUCLEOTIDE SEQUENCE [LARGE SCALE GENOMIC DNA]</scope>
    <source>
        <strain>621H</strain>
    </source>
</reference>
<sequence length="270" mass="28389">MSRIQTRFAALKKEGRGALIPYLQACDPDYDTSLELLRAMPAAGADLIEIGVPFSDPSADGPTIQAAALRGLKAGATLGRVLEMVRAFRETDNETPIVLMGYLNPIDSYGPAEFCFDAAQAGVDGIIVVDMPTEEADLLDAHAREADLDIISLVAPTTSNSRLFHVLREASGFVYYVSITGITGTNSASAADLEKALPRIREATSLPVAIGFGISTPEQARTASRIGDAAVVASALIKTMASTLENGQATERTVPAVLKQLEGLAAAVRA</sequence>
<organism>
    <name type="scientific">Gluconobacter oxydans (strain 621H)</name>
    <name type="common">Gluconobacter suboxydans</name>
    <dbReference type="NCBI Taxonomy" id="290633"/>
    <lineage>
        <taxon>Bacteria</taxon>
        <taxon>Pseudomonadati</taxon>
        <taxon>Pseudomonadota</taxon>
        <taxon>Alphaproteobacteria</taxon>
        <taxon>Acetobacterales</taxon>
        <taxon>Acetobacteraceae</taxon>
        <taxon>Gluconobacter</taxon>
    </lineage>
</organism>
<name>TRPA_GLUOX</name>
<proteinExistence type="inferred from homology"/>